<evidence type="ECO:0000255" key="1">
    <source>
        <dbReference type="HAMAP-Rule" id="MF_03065"/>
    </source>
</evidence>
<evidence type="ECO:0000256" key="2">
    <source>
        <dbReference type="SAM" id="MobiDB-lite"/>
    </source>
</evidence>
<protein>
    <recommendedName>
        <fullName evidence="1">Regulator of telomere elongation helicase 1</fullName>
        <ecNumber evidence="1">5.6.2.-</ecNumber>
    </recommendedName>
</protein>
<accession>Q5RE34</accession>
<name>RTEL1_PONAB</name>
<keyword id="KW-0004">4Fe-4S</keyword>
<keyword id="KW-0067">ATP-binding</keyword>
<keyword id="KW-0227">DNA damage</keyword>
<keyword id="KW-0234">DNA repair</keyword>
<keyword id="KW-0238">DNA-binding</keyword>
<keyword id="KW-0347">Helicase</keyword>
<keyword id="KW-0378">Hydrolase</keyword>
<keyword id="KW-0408">Iron</keyword>
<keyword id="KW-0411">Iron-sulfur</keyword>
<keyword id="KW-0413">Isomerase</keyword>
<keyword id="KW-0479">Metal-binding</keyword>
<keyword id="KW-0547">Nucleotide-binding</keyword>
<keyword id="KW-0539">Nucleus</keyword>
<keyword id="KW-1185">Reference proteome</keyword>
<organism>
    <name type="scientific">Pongo abelii</name>
    <name type="common">Sumatran orangutan</name>
    <name type="synonym">Pongo pygmaeus abelii</name>
    <dbReference type="NCBI Taxonomy" id="9601"/>
    <lineage>
        <taxon>Eukaryota</taxon>
        <taxon>Metazoa</taxon>
        <taxon>Chordata</taxon>
        <taxon>Craniata</taxon>
        <taxon>Vertebrata</taxon>
        <taxon>Euteleostomi</taxon>
        <taxon>Mammalia</taxon>
        <taxon>Eutheria</taxon>
        <taxon>Euarchontoglires</taxon>
        <taxon>Primates</taxon>
        <taxon>Haplorrhini</taxon>
        <taxon>Catarrhini</taxon>
        <taxon>Hominidae</taxon>
        <taxon>Pongo</taxon>
    </lineage>
</organism>
<feature type="chain" id="PRO_0000370612" description="Regulator of telomere elongation helicase 1">
    <location>
        <begin position="1"/>
        <end position="1302"/>
    </location>
</feature>
<feature type="domain" description="Helicase ATP-binding" evidence="1">
    <location>
        <begin position="7"/>
        <end position="297"/>
    </location>
</feature>
<feature type="region of interest" description="Disordered" evidence="2">
    <location>
        <begin position="758"/>
        <end position="819"/>
    </location>
</feature>
<feature type="region of interest" description="Disordered" evidence="2">
    <location>
        <begin position="981"/>
        <end position="1006"/>
    </location>
</feature>
<feature type="region of interest" description="Disordered" evidence="2">
    <location>
        <begin position="1019"/>
        <end position="1058"/>
    </location>
</feature>
<feature type="region of interest" description="Disordered" evidence="2">
    <location>
        <begin position="1134"/>
        <end position="1153"/>
    </location>
</feature>
<feature type="region of interest" description="Disordered" evidence="2">
    <location>
        <begin position="1160"/>
        <end position="1234"/>
    </location>
</feature>
<feature type="short sequence motif" description="Nuclear localization signal" evidence="1">
    <location>
        <begin position="152"/>
        <end position="168"/>
    </location>
</feature>
<feature type="short sequence motif" description="DEAH box">
    <location>
        <begin position="251"/>
        <end position="254"/>
    </location>
</feature>
<feature type="short sequence motif" description="Nuclear localization signal" evidence="1">
    <location>
        <begin position="873"/>
        <end position="879"/>
    </location>
</feature>
<feature type="short sequence motif" description="PIP-box">
    <location>
        <begin position="1180"/>
        <end position="1187"/>
    </location>
</feature>
<feature type="compositionally biased region" description="Low complexity" evidence="2">
    <location>
        <begin position="758"/>
        <end position="767"/>
    </location>
</feature>
<feature type="compositionally biased region" description="Basic and acidic residues" evidence="2">
    <location>
        <begin position="770"/>
        <end position="780"/>
    </location>
</feature>
<feature type="compositionally biased region" description="Polar residues" evidence="2">
    <location>
        <begin position="1178"/>
        <end position="1187"/>
    </location>
</feature>
<feature type="binding site" evidence="1">
    <location>
        <begin position="42"/>
        <end position="49"/>
    </location>
    <ligand>
        <name>ATP</name>
        <dbReference type="ChEBI" id="CHEBI:30616"/>
    </ligand>
</feature>
<feature type="binding site" evidence="1">
    <location>
        <position position="146"/>
    </location>
    <ligand>
        <name>[4Fe-4S] cluster</name>
        <dbReference type="ChEBI" id="CHEBI:49883"/>
    </ligand>
</feature>
<feature type="binding site" evidence="1">
    <location>
        <position position="164"/>
    </location>
    <ligand>
        <name>[4Fe-4S] cluster</name>
        <dbReference type="ChEBI" id="CHEBI:49883"/>
    </ligand>
</feature>
<feature type="binding site" evidence="1">
    <location>
        <position position="173"/>
    </location>
    <ligand>
        <name>[4Fe-4S] cluster</name>
        <dbReference type="ChEBI" id="CHEBI:49883"/>
    </ligand>
</feature>
<feature type="binding site" evidence="1">
    <location>
        <position position="208"/>
    </location>
    <ligand>
        <name>[4Fe-4S] cluster</name>
        <dbReference type="ChEBI" id="CHEBI:49883"/>
    </ligand>
</feature>
<gene>
    <name evidence="1" type="primary">RTEL1</name>
</gene>
<reference key="1">
    <citation type="submission" date="2004-11" db="EMBL/GenBank/DDBJ databases">
        <authorList>
            <consortium name="The German cDNA consortium"/>
        </authorList>
    </citation>
    <scope>NUCLEOTIDE SEQUENCE [LARGE SCALE MRNA]</scope>
    <source>
        <tissue>Brain cortex</tissue>
    </source>
</reference>
<dbReference type="EC" id="5.6.2.-" evidence="1"/>
<dbReference type="EMBL" id="CR857704">
    <property type="protein sequence ID" value="CAH89973.1"/>
    <property type="molecule type" value="mRNA"/>
</dbReference>
<dbReference type="RefSeq" id="NP_001124929.1">
    <property type="nucleotide sequence ID" value="NM_001131457.1"/>
</dbReference>
<dbReference type="SMR" id="Q5RE34"/>
<dbReference type="FunCoup" id="Q5RE34">
    <property type="interactions" value="2636"/>
</dbReference>
<dbReference type="STRING" id="9601.ENSPPYP00000012562"/>
<dbReference type="GeneID" id="100171800"/>
<dbReference type="KEGG" id="pon:100171800"/>
<dbReference type="CTD" id="51750"/>
<dbReference type="eggNOG" id="KOG1132">
    <property type="taxonomic scope" value="Eukaryota"/>
</dbReference>
<dbReference type="InParanoid" id="Q5RE34"/>
<dbReference type="OrthoDB" id="19182at2759"/>
<dbReference type="Proteomes" id="UP000001595">
    <property type="component" value="Unplaced"/>
</dbReference>
<dbReference type="GO" id="GO:0005634">
    <property type="term" value="C:nucleus"/>
    <property type="evidence" value="ECO:0000250"/>
    <property type="project" value="UniProtKB"/>
</dbReference>
<dbReference type="GO" id="GO:0051539">
    <property type="term" value="F:4 iron, 4 sulfur cluster binding"/>
    <property type="evidence" value="ECO:0007669"/>
    <property type="project" value="UniProtKB-UniRule"/>
</dbReference>
<dbReference type="GO" id="GO:0005524">
    <property type="term" value="F:ATP binding"/>
    <property type="evidence" value="ECO:0000250"/>
    <property type="project" value="UniProtKB"/>
</dbReference>
<dbReference type="GO" id="GO:0016887">
    <property type="term" value="F:ATP hydrolysis activity"/>
    <property type="evidence" value="ECO:0007669"/>
    <property type="project" value="RHEA"/>
</dbReference>
<dbReference type="GO" id="GO:0003677">
    <property type="term" value="F:DNA binding"/>
    <property type="evidence" value="ECO:0007669"/>
    <property type="project" value="UniProtKB-UniRule"/>
</dbReference>
<dbReference type="GO" id="GO:0003678">
    <property type="term" value="F:DNA helicase activity"/>
    <property type="evidence" value="ECO:0000250"/>
    <property type="project" value="UniProtKB"/>
</dbReference>
<dbReference type="GO" id="GO:0070182">
    <property type="term" value="F:DNA polymerase binding"/>
    <property type="evidence" value="ECO:0007669"/>
    <property type="project" value="TreeGrafter"/>
</dbReference>
<dbReference type="GO" id="GO:0046872">
    <property type="term" value="F:metal ion binding"/>
    <property type="evidence" value="ECO:0007669"/>
    <property type="project" value="UniProtKB-UniRule"/>
</dbReference>
<dbReference type="GO" id="GO:0006310">
    <property type="term" value="P:DNA recombination"/>
    <property type="evidence" value="ECO:0007669"/>
    <property type="project" value="InterPro"/>
</dbReference>
<dbReference type="GO" id="GO:0006281">
    <property type="term" value="P:DNA repair"/>
    <property type="evidence" value="ECO:0007669"/>
    <property type="project" value="UniProtKB-UniRule"/>
</dbReference>
<dbReference type="GO" id="GO:0006260">
    <property type="term" value="P:DNA replication"/>
    <property type="evidence" value="ECO:0007669"/>
    <property type="project" value="InterPro"/>
</dbReference>
<dbReference type="GO" id="GO:0045910">
    <property type="term" value="P:negative regulation of DNA recombination"/>
    <property type="evidence" value="ECO:0007669"/>
    <property type="project" value="TreeGrafter"/>
</dbReference>
<dbReference type="GO" id="GO:1904430">
    <property type="term" value="P:negative regulation of t-circle formation"/>
    <property type="evidence" value="ECO:0007669"/>
    <property type="project" value="TreeGrafter"/>
</dbReference>
<dbReference type="GO" id="GO:0010569">
    <property type="term" value="P:regulation of double-strand break repair via homologous recombination"/>
    <property type="evidence" value="ECO:0000250"/>
    <property type="project" value="UniProtKB"/>
</dbReference>
<dbReference type="GO" id="GO:0000723">
    <property type="term" value="P:telomere maintenance"/>
    <property type="evidence" value="ECO:0000250"/>
    <property type="project" value="UniProtKB"/>
</dbReference>
<dbReference type="GO" id="GO:0090657">
    <property type="term" value="P:telomeric loop disassembly"/>
    <property type="evidence" value="ECO:0007669"/>
    <property type="project" value="TreeGrafter"/>
</dbReference>
<dbReference type="CDD" id="cd17970">
    <property type="entry name" value="DEAHc_FancJ"/>
    <property type="match status" value="1"/>
</dbReference>
<dbReference type="CDD" id="cd13932">
    <property type="entry name" value="HN_RTEL1"/>
    <property type="match status" value="2"/>
</dbReference>
<dbReference type="CDD" id="cd18788">
    <property type="entry name" value="SF2_C_XPD"/>
    <property type="match status" value="1"/>
</dbReference>
<dbReference type="FunFam" id="1.20.1160.20:FF:000006">
    <property type="entry name" value="Regulator of telomere elongation helicase 1"/>
    <property type="match status" value="1"/>
</dbReference>
<dbReference type="FunFam" id="1.20.1160.20:FF:000009">
    <property type="entry name" value="Regulator of telomere elongation helicase 1"/>
    <property type="match status" value="1"/>
</dbReference>
<dbReference type="FunFam" id="3.40.50.300:FF:000431">
    <property type="entry name" value="Regulator of telomere elongation helicase 1"/>
    <property type="match status" value="1"/>
</dbReference>
<dbReference type="FunFam" id="3.40.50.300:FF:000691">
    <property type="entry name" value="Regulator of telomere elongation helicase 1"/>
    <property type="match status" value="1"/>
</dbReference>
<dbReference type="Gene3D" id="1.20.1160.20">
    <property type="match status" value="2"/>
</dbReference>
<dbReference type="Gene3D" id="3.40.50.300">
    <property type="entry name" value="P-loop containing nucleotide triphosphate hydrolases"/>
    <property type="match status" value="2"/>
</dbReference>
<dbReference type="HAMAP" id="MF_03065">
    <property type="entry name" value="RTEL1"/>
    <property type="match status" value="1"/>
</dbReference>
<dbReference type="InterPro" id="IPR006555">
    <property type="entry name" value="ATP-dep_Helicase_C"/>
</dbReference>
<dbReference type="InterPro" id="IPR045028">
    <property type="entry name" value="DinG/Rad3-like"/>
</dbReference>
<dbReference type="InterPro" id="IPR014013">
    <property type="entry name" value="Helic_SF1/SF2_ATP-bd_DinG/Rad3"/>
</dbReference>
<dbReference type="InterPro" id="IPR006554">
    <property type="entry name" value="Helicase-like_DEXD_c2"/>
</dbReference>
<dbReference type="InterPro" id="IPR049909">
    <property type="entry name" value="HHD_RTEL1"/>
</dbReference>
<dbReference type="InterPro" id="IPR027417">
    <property type="entry name" value="P-loop_NTPase"/>
</dbReference>
<dbReference type="InterPro" id="IPR010614">
    <property type="entry name" value="RAD3-like_helicase_DEAD"/>
</dbReference>
<dbReference type="InterPro" id="IPR013020">
    <property type="entry name" value="Rad3/Chl1-like"/>
</dbReference>
<dbReference type="InterPro" id="IPR030845">
    <property type="entry name" value="RTEL1"/>
</dbReference>
<dbReference type="NCBIfam" id="TIGR00604">
    <property type="entry name" value="rad3"/>
    <property type="match status" value="1"/>
</dbReference>
<dbReference type="PANTHER" id="PTHR11472">
    <property type="entry name" value="DNA REPAIR DEAD HELICASE RAD3/XP-D SUBFAMILY MEMBER"/>
    <property type="match status" value="1"/>
</dbReference>
<dbReference type="PANTHER" id="PTHR11472:SF34">
    <property type="entry name" value="REGULATOR OF TELOMERE ELONGATION HELICASE 1"/>
    <property type="match status" value="1"/>
</dbReference>
<dbReference type="Pfam" id="PF23109">
    <property type="entry name" value="ARCH_RTEL1"/>
    <property type="match status" value="1"/>
</dbReference>
<dbReference type="Pfam" id="PF06733">
    <property type="entry name" value="DEAD_2"/>
    <property type="match status" value="1"/>
</dbReference>
<dbReference type="Pfam" id="PF13307">
    <property type="entry name" value="Helicase_C_2"/>
    <property type="match status" value="1"/>
</dbReference>
<dbReference type="Pfam" id="PF23116">
    <property type="entry name" value="HHD_RTEL1"/>
    <property type="match status" value="2"/>
</dbReference>
<dbReference type="SMART" id="SM00488">
    <property type="entry name" value="DEXDc2"/>
    <property type="match status" value="1"/>
</dbReference>
<dbReference type="SMART" id="SM00491">
    <property type="entry name" value="HELICc2"/>
    <property type="match status" value="1"/>
</dbReference>
<dbReference type="SUPFAM" id="SSF52540">
    <property type="entry name" value="P-loop containing nucleoside triphosphate hydrolases"/>
    <property type="match status" value="2"/>
</dbReference>
<dbReference type="PROSITE" id="PS51193">
    <property type="entry name" value="HELICASE_ATP_BIND_2"/>
    <property type="match status" value="1"/>
</dbReference>
<comment type="function">
    <text evidence="1">A probable ATP-dependent DNA helicase implicated in telomere-length regulation, DNA repair and the maintenance of genomic stability. Acts as an anti-recombinase to counteract toxic recombination and limit crossover during meiosis. Regulates meiotic recombination and crossover homeostasis by physically dissociating strand invasion events and thereby promotes noncrossover repair by meiotic synthesis dependent strand annealing (SDSA) as well as disassembly of D loop recombination intermediates. Also disassembles T loops and prevents telomere fragility by counteracting telomeric G4-DNA structures, which together ensure the dynamics and stability of the telomere.</text>
</comment>
<comment type="catalytic activity">
    <reaction evidence="1">
        <text>ATP + H2O = ADP + phosphate + H(+)</text>
        <dbReference type="Rhea" id="RHEA:13065"/>
        <dbReference type="ChEBI" id="CHEBI:15377"/>
        <dbReference type="ChEBI" id="CHEBI:15378"/>
        <dbReference type="ChEBI" id="CHEBI:30616"/>
        <dbReference type="ChEBI" id="CHEBI:43474"/>
        <dbReference type="ChEBI" id="CHEBI:456216"/>
    </reaction>
</comment>
<comment type="subunit">
    <text evidence="1">Interacts with TERF1. Interacts (via PIP-box) with PCNA; the interaction is direct and essential for suppressing telomere fragility. Interacts with MMS19; the interaction mediates the association of RTEL1 with the cytosolic iron-sulfur protein assembly (CIA) complex.</text>
</comment>
<comment type="subcellular location">
    <subcellularLocation>
        <location evidence="1">Nucleus</location>
    </subcellularLocation>
    <text evidence="1">Colocalizes with PCNA within the replication foci in S-phase cells.</text>
</comment>
<comment type="domain">
    <text evidence="1">The PIP-box (PCNA interacting peptide) motif mediates the interaction with PCNA and localization to replication foci.</text>
</comment>
<comment type="similarity">
    <text evidence="1">Belongs to the helicase family. RAD3/XPD subfamily.</text>
</comment>
<sequence length="1302" mass="142673">MPKIVLNGVTVDFPFQPYKCQQEYMTKVLECLQQKVNGILESHTGTGKTLCLLCTTLAWREHLRDGISARKIAERVQGELFPDRALSSWGNAAAAAAGDPIACYTDIPKIIYASRTHSQLTQVINELRNTSYRPKVCVLGSREQLCIHPEVKKQESNHIQIHLCRKKVASRSCHFYNNVEEKSLEQELASPILDIEDLVKSGSKHRVCPYYLSRNLKQQADIIFMPYNYLLDAKSRRAHNIDLKGTVVIFDEAHNVEKMCEESASFDLTPHDLASGLDIIDQVLEEQTKTAQQGEPHPEFSADSTSPGLNMELEDIAKLKMILLRLEGAIDAVELPGDDSGVTKPGSYIFELFAEAQITFQTKVCILDSLDQIIQHLAGRAGVFTNTAGLQKLADIIQIVFSVDPSEGGPGSLAGLGALQSYKVHIHPDAGHRQTAQRSDAWSTTAARKRGKVLSYWCFSPGLSMRELVRQGVRSLILTSGTLAPVSSFALEMQIPFPVCLENPHIIDKHQIWVGVVPRGPDGAQLSSAFDRRFSEECLSSLGKALGNTARVVPCGLLIFFPSYPVMEKSLEFWRARDLARKMEALKPLFVEPRSKGSFSETISAYYARVAAPGSTGATFLAVCRGKASEGLDFSDTNGRGVIVTGLPYPPRMDPRVVLKMQFLDEMKGQGGAGGQFLSGQEWYRQQASRAVNQAIGRVIRHRQDYGAVFLCDHRFAFADARAQLPSWVRPHVRVYDNFGHVIRDVAQFFRVAERTMPAPAPRATAPSVREGEDAVREVKSPGPLFSTRKAKSLDLHVPSLKQRSSGSAAAGDPESSLCVEYEQEPIPARQRPRGLLAALEHSEQQAGSPGEEQAHSCSTLFLLSAKRPAEEPRGGRKKIRLVSHPEEPVAGAQTDRAKLYMVAVKQELSQANFATFTQALQDYKGSDDFAALAACLGPLFAEDPKKHSLLQGFYQFVRPHHKQQFEEVCIQLTGRGCGYRPEHSIPRRQPAQPVLDPTGRTAPDPKLTLSKAAAQQLDPREHLNQGRPHLSPRPPPTGDPGSHPQWRSGVPRAGKQGQRAVSAYLADARRALGSAGCSQLLAALRAYKQDDDLDKVLAVLAALTTAKPEDFPLLHRFSMFVRPHHKQRFSQTCTDLTGRPYPGMERPGPQEESLVVPPVLTHGAPQPGPSRSEKPGKTQSKISSLLRQRPAGTVGAGSEDAGPSQSPGPPHGPAASEWGEPHGRDIAGQQAAGAPGGPLSAGCVCQGCGAEDVVPFQCPACDFQRCQACWQRHLQASRMCPACHTASRKQSVTQVFWPEPQ</sequence>
<proteinExistence type="evidence at transcript level"/>